<gene>
    <name evidence="5" type="primary">esxA</name>
    <name type="ordered locus">SAOUHSC_00257</name>
</gene>
<protein>
    <recommendedName>
        <fullName evidence="2">Type VII secretion system extracellular protein A</fullName>
        <shortName evidence="2">Ess extracellular protein A</shortName>
    </recommendedName>
</protein>
<dbReference type="EMBL" id="CP000253">
    <property type="protein sequence ID" value="ABD29431.1"/>
    <property type="molecule type" value="Genomic_DNA"/>
</dbReference>
<dbReference type="RefSeq" id="WP_001240826.1">
    <property type="nucleotide sequence ID" value="NZ_LS483365.1"/>
</dbReference>
<dbReference type="RefSeq" id="YP_498851.1">
    <property type="nucleotide sequence ID" value="NC_007795.1"/>
</dbReference>
<dbReference type="PDB" id="2VRZ">
    <property type="method" value="X-ray"/>
    <property type="resolution" value="1.90 A"/>
    <property type="chains" value="A/B=1-97"/>
</dbReference>
<dbReference type="PDB" id="2VS0">
    <property type="method" value="X-ray"/>
    <property type="resolution" value="1.40 A"/>
    <property type="chains" value="A/B=1-97"/>
</dbReference>
<dbReference type="PDBsum" id="2VRZ"/>
<dbReference type="PDBsum" id="2VS0"/>
<dbReference type="SMR" id="Q2G189"/>
<dbReference type="STRING" id="93061.SAOUHSC_00257"/>
<dbReference type="PaxDb" id="1280-SAXN108_0262"/>
<dbReference type="GeneID" id="3919199"/>
<dbReference type="GeneID" id="98344606"/>
<dbReference type="KEGG" id="sao:SAOUHSC_00257"/>
<dbReference type="PATRIC" id="fig|93061.5.peg.236"/>
<dbReference type="eggNOG" id="COG4842">
    <property type="taxonomic scope" value="Bacteria"/>
</dbReference>
<dbReference type="HOGENOM" id="CLU_158563_4_0_9"/>
<dbReference type="OrthoDB" id="4978934at2"/>
<dbReference type="PRO" id="PR:Q2G189"/>
<dbReference type="Proteomes" id="UP000008816">
    <property type="component" value="Chromosome"/>
</dbReference>
<dbReference type="GO" id="GO:0005576">
    <property type="term" value="C:extracellular region"/>
    <property type="evidence" value="ECO:0007669"/>
    <property type="project" value="UniProtKB-SubCell"/>
</dbReference>
<dbReference type="Gene3D" id="1.10.287.1060">
    <property type="entry name" value="ESAT-6-like"/>
    <property type="match status" value="1"/>
</dbReference>
<dbReference type="InterPro" id="IPR036689">
    <property type="entry name" value="ESAT-6-like_sf"/>
</dbReference>
<dbReference type="InterPro" id="IPR010310">
    <property type="entry name" value="T7SS_ESAT-6-like"/>
</dbReference>
<dbReference type="NCBIfam" id="TIGR03930">
    <property type="entry name" value="WXG100_ESAT6"/>
    <property type="match status" value="1"/>
</dbReference>
<dbReference type="Pfam" id="PF06013">
    <property type="entry name" value="WXG100"/>
    <property type="match status" value="1"/>
</dbReference>
<dbReference type="SUPFAM" id="SSF140453">
    <property type="entry name" value="EsxAB dimer-like"/>
    <property type="match status" value="1"/>
</dbReference>
<name>ESXA_STAA8</name>
<sequence>MAMIKMSPEEIRAKSQSYGQGSDQIRQILSDLTRAQGEIAANWEGQAFSRFEEQFQQLSPKVEKFAQLLEEIKQQLNSTADAVQEQDQQLSNNFGLQ</sequence>
<feature type="chain" id="PRO_0000438300" description="Type VII secretion system extracellular protein A">
    <location>
        <begin position="1"/>
        <end position="97"/>
    </location>
</feature>
<keyword id="KW-0002">3D-structure</keyword>
<keyword id="KW-1185">Reference proteome</keyword>
<keyword id="KW-0964">Secreted</keyword>
<keyword id="KW-0843">Virulence</keyword>
<proteinExistence type="evidence at protein level"/>
<comment type="function">
    <text evidence="1 2">Virulence factor that is important for the establishment of infection in the host. EsxA is required for EsxB synthesis as well as secretion (By similarity). Modulates host cell apoptotic pathways and mediates together with EsxB the release of S.aureus from the host cell. By acting on apoptosis, plays a role in the modulation of dendritic cell-mediated immunity (By similarity).</text>
</comment>
<comment type="subunit">
    <text evidence="4">Homodimer (PubMed:18773907). When mixed with EsxB does not form heterodimers (PubMed:18773907). Crystallizes as a 4 helix bundle, the 2 subunits are anti-parallel (PubMed:18773907).</text>
</comment>
<comment type="subcellular location">
    <subcellularLocation>
        <location evidence="2">Secreted</location>
    </subcellularLocation>
    <text evidence="2">Secreted via the ESAT-6 secretion system (Ess) / type VII secretion system (T7SS).</text>
</comment>
<comment type="similarity">
    <text evidence="3">Belongs to the WXG100 family. sagExaA-like subfamily.</text>
</comment>
<comment type="caution">
    <text evidence="6">The crystal structure contains zinc ions that may be due to the crystallization medium.</text>
</comment>
<accession>Q2G189</accession>
<organism>
    <name type="scientific">Staphylococcus aureus (strain NCTC 8325 / PS 47)</name>
    <dbReference type="NCBI Taxonomy" id="93061"/>
    <lineage>
        <taxon>Bacteria</taxon>
        <taxon>Bacillati</taxon>
        <taxon>Bacillota</taxon>
        <taxon>Bacilli</taxon>
        <taxon>Bacillales</taxon>
        <taxon>Staphylococcaceae</taxon>
        <taxon>Staphylococcus</taxon>
    </lineage>
</organism>
<reference key="1">
    <citation type="book" date="2006" name="Gram positive pathogens, 2nd edition">
        <title>The Staphylococcus aureus NCTC 8325 genome.</title>
        <editorList>
            <person name="Fischetti V."/>
            <person name="Novick R."/>
            <person name="Ferretti J."/>
            <person name="Portnoy D."/>
            <person name="Rood J."/>
        </editorList>
        <authorList>
            <person name="Gillaspy A.F."/>
            <person name="Worrell V."/>
            <person name="Orvis J."/>
            <person name="Roe B.A."/>
            <person name="Dyer D.W."/>
            <person name="Iandolo J.J."/>
        </authorList>
    </citation>
    <scope>NUCLEOTIDE SEQUENCE [LARGE SCALE GENOMIC DNA]</scope>
    <source>
        <strain>NCTC 8325 / PS 47</strain>
    </source>
</reference>
<reference evidence="7 8" key="2">
    <citation type="journal article" date="2008" name="J. Mol. Biol.">
        <title>Structure of Staphylococcus aureus EsxA suggests a contribution to virulence by action as a transport chaperone and/or adaptor protein.</title>
        <authorList>
            <person name="Sundaramoorthy R."/>
            <person name="Fyfe P.K."/>
            <person name="Hunter W.N."/>
        </authorList>
    </citation>
    <scope>X-RAY CRYSTALLOGRAPHY (1.40 ANGSTROMS) IN COMPLEX WITH ZINC</scope>
    <scope>SUBUNIT</scope>
    <source>
        <strain>ATCC 35556 / SA113</strain>
    </source>
</reference>
<evidence type="ECO:0000250" key="1">
    <source>
        <dbReference type="UniProtKB" id="A0A0H2XI99"/>
    </source>
</evidence>
<evidence type="ECO:0000250" key="2">
    <source>
        <dbReference type="UniProtKB" id="P0C046"/>
    </source>
</evidence>
<evidence type="ECO:0000250" key="3">
    <source>
        <dbReference type="UniProtKB" id="Q99WU4"/>
    </source>
</evidence>
<evidence type="ECO:0000269" key="4">
    <source>
    </source>
</evidence>
<evidence type="ECO:0000303" key="5">
    <source>
    </source>
</evidence>
<evidence type="ECO:0000305" key="6">
    <source>
    </source>
</evidence>
<evidence type="ECO:0007744" key="7">
    <source>
        <dbReference type="PDB" id="2VRZ"/>
    </source>
</evidence>
<evidence type="ECO:0007744" key="8">
    <source>
        <dbReference type="PDB" id="2VS0"/>
    </source>
</evidence>